<feature type="chain" id="PRO_0000250668" description="Uncharacterized protein At1g03900">
    <location>
        <begin position="1"/>
        <end position="272"/>
    </location>
</feature>
<feature type="region of interest" description="Disordered" evidence="1">
    <location>
        <begin position="136"/>
        <end position="157"/>
    </location>
</feature>
<feature type="region of interest" description="Disordered" evidence="1">
    <location>
        <begin position="174"/>
        <end position="272"/>
    </location>
</feature>
<feature type="compositionally biased region" description="Basic and acidic residues" evidence="1">
    <location>
        <begin position="136"/>
        <end position="156"/>
    </location>
</feature>
<feature type="compositionally biased region" description="Basic and acidic residues" evidence="1">
    <location>
        <begin position="231"/>
        <end position="240"/>
    </location>
</feature>
<feature type="compositionally biased region" description="Polar residues" evidence="1">
    <location>
        <begin position="243"/>
        <end position="252"/>
    </location>
</feature>
<feature type="compositionally biased region" description="Low complexity" evidence="1">
    <location>
        <begin position="253"/>
        <end position="272"/>
    </location>
</feature>
<feature type="sequence conflict" description="In Ref. 4; BAD44106." evidence="2" ref="4">
    <original>S</original>
    <variation>P</variation>
    <location>
        <position position="191"/>
    </location>
</feature>
<reference key="1">
    <citation type="journal article" date="2000" name="Nature">
        <title>Sequence and analysis of chromosome 1 of the plant Arabidopsis thaliana.</title>
        <authorList>
            <person name="Theologis A."/>
            <person name="Ecker J.R."/>
            <person name="Palm C.J."/>
            <person name="Federspiel N.A."/>
            <person name="Kaul S."/>
            <person name="White O."/>
            <person name="Alonso J."/>
            <person name="Altafi H."/>
            <person name="Araujo R."/>
            <person name="Bowman C.L."/>
            <person name="Brooks S.Y."/>
            <person name="Buehler E."/>
            <person name="Chan A."/>
            <person name="Chao Q."/>
            <person name="Chen H."/>
            <person name="Cheuk R.F."/>
            <person name="Chin C.W."/>
            <person name="Chung M.K."/>
            <person name="Conn L."/>
            <person name="Conway A.B."/>
            <person name="Conway A.R."/>
            <person name="Creasy T.H."/>
            <person name="Dewar K."/>
            <person name="Dunn P."/>
            <person name="Etgu P."/>
            <person name="Feldblyum T.V."/>
            <person name="Feng J.-D."/>
            <person name="Fong B."/>
            <person name="Fujii C.Y."/>
            <person name="Gill J.E."/>
            <person name="Goldsmith A.D."/>
            <person name="Haas B."/>
            <person name="Hansen N.F."/>
            <person name="Hughes B."/>
            <person name="Huizar L."/>
            <person name="Hunter J.L."/>
            <person name="Jenkins J."/>
            <person name="Johnson-Hopson C."/>
            <person name="Khan S."/>
            <person name="Khaykin E."/>
            <person name="Kim C.J."/>
            <person name="Koo H.L."/>
            <person name="Kremenetskaia I."/>
            <person name="Kurtz D.B."/>
            <person name="Kwan A."/>
            <person name="Lam B."/>
            <person name="Langin-Hooper S."/>
            <person name="Lee A."/>
            <person name="Lee J.M."/>
            <person name="Lenz C.A."/>
            <person name="Li J.H."/>
            <person name="Li Y.-P."/>
            <person name="Lin X."/>
            <person name="Liu S.X."/>
            <person name="Liu Z.A."/>
            <person name="Luros J.S."/>
            <person name="Maiti R."/>
            <person name="Marziali A."/>
            <person name="Militscher J."/>
            <person name="Miranda M."/>
            <person name="Nguyen M."/>
            <person name="Nierman W.C."/>
            <person name="Osborne B.I."/>
            <person name="Pai G."/>
            <person name="Peterson J."/>
            <person name="Pham P.K."/>
            <person name="Rizzo M."/>
            <person name="Rooney T."/>
            <person name="Rowley D."/>
            <person name="Sakano H."/>
            <person name="Salzberg S.L."/>
            <person name="Schwartz J.R."/>
            <person name="Shinn P."/>
            <person name="Southwick A.M."/>
            <person name="Sun H."/>
            <person name="Tallon L.J."/>
            <person name="Tambunga G."/>
            <person name="Toriumi M.J."/>
            <person name="Town C.D."/>
            <person name="Utterback T."/>
            <person name="Van Aken S."/>
            <person name="Vaysberg M."/>
            <person name="Vysotskaia V.S."/>
            <person name="Walker M."/>
            <person name="Wu D."/>
            <person name="Yu G."/>
            <person name="Fraser C.M."/>
            <person name="Venter J.C."/>
            <person name="Davis R.W."/>
        </authorList>
    </citation>
    <scope>NUCLEOTIDE SEQUENCE [LARGE SCALE GENOMIC DNA]</scope>
    <source>
        <strain>cv. Columbia</strain>
    </source>
</reference>
<reference key="2">
    <citation type="journal article" date="2017" name="Plant J.">
        <title>Araport11: a complete reannotation of the Arabidopsis thaliana reference genome.</title>
        <authorList>
            <person name="Cheng C.Y."/>
            <person name="Krishnakumar V."/>
            <person name="Chan A.P."/>
            <person name="Thibaud-Nissen F."/>
            <person name="Schobel S."/>
            <person name="Town C.D."/>
        </authorList>
    </citation>
    <scope>GENOME REANNOTATION</scope>
    <source>
        <strain>cv. Columbia</strain>
    </source>
</reference>
<reference key="3">
    <citation type="journal article" date="2003" name="Science">
        <title>Empirical analysis of transcriptional activity in the Arabidopsis genome.</title>
        <authorList>
            <person name="Yamada K."/>
            <person name="Lim J."/>
            <person name="Dale J.M."/>
            <person name="Chen H."/>
            <person name="Shinn P."/>
            <person name="Palm C.J."/>
            <person name="Southwick A.M."/>
            <person name="Wu H.C."/>
            <person name="Kim C.J."/>
            <person name="Nguyen M."/>
            <person name="Pham P.K."/>
            <person name="Cheuk R.F."/>
            <person name="Karlin-Newmann G."/>
            <person name="Liu S.X."/>
            <person name="Lam B."/>
            <person name="Sakano H."/>
            <person name="Wu T."/>
            <person name="Yu G."/>
            <person name="Miranda M."/>
            <person name="Quach H.L."/>
            <person name="Tripp M."/>
            <person name="Chang C.H."/>
            <person name="Lee J.M."/>
            <person name="Toriumi M.J."/>
            <person name="Chan M.M."/>
            <person name="Tang C.C."/>
            <person name="Onodera C.S."/>
            <person name="Deng J.M."/>
            <person name="Akiyama K."/>
            <person name="Ansari Y."/>
            <person name="Arakawa T."/>
            <person name="Banh J."/>
            <person name="Banno F."/>
            <person name="Bowser L."/>
            <person name="Brooks S.Y."/>
            <person name="Carninci P."/>
            <person name="Chao Q."/>
            <person name="Choy N."/>
            <person name="Enju A."/>
            <person name="Goldsmith A.D."/>
            <person name="Gurjal M."/>
            <person name="Hansen N.F."/>
            <person name="Hayashizaki Y."/>
            <person name="Johnson-Hopson C."/>
            <person name="Hsuan V.W."/>
            <person name="Iida K."/>
            <person name="Karnes M."/>
            <person name="Khan S."/>
            <person name="Koesema E."/>
            <person name="Ishida J."/>
            <person name="Jiang P.X."/>
            <person name="Jones T."/>
            <person name="Kawai J."/>
            <person name="Kamiya A."/>
            <person name="Meyers C."/>
            <person name="Nakajima M."/>
            <person name="Narusaka M."/>
            <person name="Seki M."/>
            <person name="Sakurai T."/>
            <person name="Satou M."/>
            <person name="Tamse R."/>
            <person name="Vaysberg M."/>
            <person name="Wallender E.K."/>
            <person name="Wong C."/>
            <person name="Yamamura Y."/>
            <person name="Yuan S."/>
            <person name="Shinozaki K."/>
            <person name="Davis R.W."/>
            <person name="Theologis A."/>
            <person name="Ecker J.R."/>
        </authorList>
    </citation>
    <scope>NUCLEOTIDE SEQUENCE [LARGE SCALE MRNA]</scope>
    <source>
        <strain>cv. Columbia</strain>
    </source>
</reference>
<reference key="4">
    <citation type="submission" date="2004-09" db="EMBL/GenBank/DDBJ databases">
        <title>Large-scale analysis of RIKEN Arabidopsis full-length (RAFL) cDNAs.</title>
        <authorList>
            <person name="Totoki Y."/>
            <person name="Seki M."/>
            <person name="Ishida J."/>
            <person name="Nakajima M."/>
            <person name="Enju A."/>
            <person name="Kamiya A."/>
            <person name="Narusaka M."/>
            <person name="Shin-i T."/>
            <person name="Nakagawa M."/>
            <person name="Sakamoto N."/>
            <person name="Oishi K."/>
            <person name="Kohara Y."/>
            <person name="Kobayashi M."/>
            <person name="Toyoda A."/>
            <person name="Sakaki Y."/>
            <person name="Sakurai T."/>
            <person name="Iida K."/>
            <person name="Akiyama K."/>
            <person name="Satou M."/>
            <person name="Toyoda T."/>
            <person name="Konagaya A."/>
            <person name="Carninci P."/>
            <person name="Kawai J."/>
            <person name="Hayashizaki Y."/>
            <person name="Shinozaki K."/>
        </authorList>
    </citation>
    <scope>NUCLEOTIDE SEQUENCE [LARGE SCALE MRNA]</scope>
    <source>
        <strain>cv. Columbia</strain>
    </source>
</reference>
<keyword id="KW-1185">Reference proteome</keyword>
<proteinExistence type="evidence at protein level"/>
<sequence>MSFEEEEEEETFEHTLLVVREVSVYKIPPRTTSGGYKCGEWLQSDKIWSGRLRVVSCKDRCEIRLEDSNSGDLFAACFVDPGRRENSVEPSLDSSRYFVLRIDDGRGKYAFIGLGFAERNEAFDFNVALSDHEKYVRREKEKETGETSESDNHIDIHPAVNHRLKEGETIRINVKPKPTTNGTGMLSAALSGTGKPKPLALAPPPKAAGVTRSPLPPPPNDPVASRIASDGCKESRRNEPLSDLSQLKKNLPSTAGSGSSKSTGAASGWAAF</sequence>
<accession>Q681Q7</accession>
<accession>Q67YX5</accession>
<accession>Q94B37</accession>
<accession>Q9ZWB0</accession>
<name>Y1390_ARATH</name>
<comment type="interaction">
    <interactant intactId="EBI-4440643">
        <id>Q681Q7</id>
    </interactant>
    <interactant intactId="EBI-4426649">
        <id>Q17TI5</id>
        <label>BRX</label>
    </interactant>
    <organismsDiffer>false</organismsDiffer>
    <experiments>4</experiments>
</comment>
<comment type="sequence caution" evidence="2">
    <conflict type="erroneous gene model prediction">
        <sequence resource="EMBL-CDS" id="AAD10694"/>
    </conflict>
    <text>The predicted gene At1g03900 has been split into 2 genes: At1g03900 and At1g03905.</text>
</comment>
<comment type="sequence caution" evidence="2">
    <conflict type="frameshift">
        <sequence resource="EMBL-CDS" id="AAK68815"/>
    </conflict>
</comment>
<comment type="sequence caution" evidence="2">
    <conflict type="frameshift">
        <sequence resource="EMBL-CDS" id="AAL66930"/>
    </conflict>
</comment>
<evidence type="ECO:0000256" key="1">
    <source>
        <dbReference type="SAM" id="MobiDB-lite"/>
    </source>
</evidence>
<evidence type="ECO:0000305" key="2"/>
<dbReference type="EMBL" id="AC003027">
    <property type="protein sequence ID" value="AAD10694.1"/>
    <property type="status" value="ALT_SEQ"/>
    <property type="molecule type" value="Genomic_DNA"/>
</dbReference>
<dbReference type="EMBL" id="CP002684">
    <property type="protein sequence ID" value="AEE27630.1"/>
    <property type="molecule type" value="Genomic_DNA"/>
</dbReference>
<dbReference type="EMBL" id="AY042875">
    <property type="protein sequence ID" value="AAK68815.1"/>
    <property type="status" value="ALT_FRAME"/>
    <property type="molecule type" value="mRNA"/>
</dbReference>
<dbReference type="EMBL" id="AY072515">
    <property type="protein sequence ID" value="AAL66930.1"/>
    <property type="status" value="ALT_FRAME"/>
    <property type="molecule type" value="mRNA"/>
</dbReference>
<dbReference type="EMBL" id="AK175162">
    <property type="protein sequence ID" value="BAD42925.1"/>
    <property type="molecule type" value="mRNA"/>
</dbReference>
<dbReference type="EMBL" id="AK175560">
    <property type="protein sequence ID" value="BAD43323.1"/>
    <property type="molecule type" value="mRNA"/>
</dbReference>
<dbReference type="EMBL" id="AK176343">
    <property type="protein sequence ID" value="BAD44106.1"/>
    <property type="molecule type" value="mRNA"/>
</dbReference>
<dbReference type="EMBL" id="AK176412">
    <property type="protein sequence ID" value="BAD44175.1"/>
    <property type="molecule type" value="mRNA"/>
</dbReference>
<dbReference type="PIR" id="G86169">
    <property type="entry name" value="G86169"/>
</dbReference>
<dbReference type="SMR" id="Q681Q7"/>
<dbReference type="BioGRID" id="24613">
    <property type="interactions" value="6"/>
</dbReference>
<dbReference type="FunCoup" id="Q681Q7">
    <property type="interactions" value="4141"/>
</dbReference>
<dbReference type="IntAct" id="Q681Q7">
    <property type="interactions" value="6"/>
</dbReference>
<dbReference type="STRING" id="3702.Q681Q7"/>
<dbReference type="iPTMnet" id="Q681Q7"/>
<dbReference type="PaxDb" id="3702-AT1G03900.1"/>
<dbReference type="ProteomicsDB" id="243049"/>
<dbReference type="EnsemblPlants" id="AT1G03900.1">
    <property type="protein sequence ID" value="AT1G03900.1"/>
    <property type="gene ID" value="AT1G03900"/>
</dbReference>
<dbReference type="Gramene" id="AT1G03900.1">
    <property type="protein sequence ID" value="AT1G03900.1"/>
    <property type="gene ID" value="AT1G03900"/>
</dbReference>
<dbReference type="KEGG" id="ath:AT1G03900"/>
<dbReference type="Araport" id="AT1G03900"/>
<dbReference type="TAIR" id="AT1G03900">
    <property type="gene designation" value="ABCI18"/>
</dbReference>
<dbReference type="eggNOG" id="KOG2500">
    <property type="taxonomic scope" value="Eukaryota"/>
</dbReference>
<dbReference type="HOGENOM" id="CLU_069884_1_0_1"/>
<dbReference type="InParanoid" id="Q681Q7"/>
<dbReference type="OMA" id="NEGHRAQ"/>
<dbReference type="OrthoDB" id="10265489at2759"/>
<dbReference type="PhylomeDB" id="Q681Q7"/>
<dbReference type="PRO" id="PR:Q681Q7"/>
<dbReference type="Proteomes" id="UP000006548">
    <property type="component" value="Chromosome 1"/>
</dbReference>
<dbReference type="ExpressionAtlas" id="Q681Q7">
    <property type="expression patterns" value="baseline and differential"/>
</dbReference>
<dbReference type="GO" id="GO:0016020">
    <property type="term" value="C:membrane"/>
    <property type="evidence" value="ECO:0007669"/>
    <property type="project" value="InterPro"/>
</dbReference>
<dbReference type="GO" id="GO:0042626">
    <property type="term" value="F:ATPase-coupled transmembrane transporter activity"/>
    <property type="evidence" value="ECO:0000250"/>
    <property type="project" value="TAIR"/>
</dbReference>
<dbReference type="GO" id="GO:0006897">
    <property type="term" value="P:endocytosis"/>
    <property type="evidence" value="ECO:0007669"/>
    <property type="project" value="InterPro"/>
</dbReference>
<dbReference type="CDD" id="cd13228">
    <property type="entry name" value="PHear_NECAP"/>
    <property type="match status" value="1"/>
</dbReference>
<dbReference type="FunFam" id="2.30.29.30:FF:000150">
    <property type="entry name" value="Adaptin ear-binding coat-associated protein"/>
    <property type="match status" value="1"/>
</dbReference>
<dbReference type="Gene3D" id="2.30.29.30">
    <property type="entry name" value="Pleckstrin-homology domain (PH domain)/Phosphotyrosine-binding domain (PTB)"/>
    <property type="match status" value="1"/>
</dbReference>
<dbReference type="InterPro" id="IPR012466">
    <property type="entry name" value="NECAP_PHear"/>
</dbReference>
<dbReference type="InterPro" id="IPR011993">
    <property type="entry name" value="PH-like_dom_sf"/>
</dbReference>
<dbReference type="PANTHER" id="PTHR12847">
    <property type="entry name" value="ATP-BINDING CASSETTE ABC TRANSPORTER-RELATED"/>
    <property type="match status" value="1"/>
</dbReference>
<dbReference type="PANTHER" id="PTHR12847:SF3">
    <property type="entry name" value="EAR-BINDING COAT-ASSOCIATED PROTEIN 2, PUTATIVE, EXPRESSED-RELATED"/>
    <property type="match status" value="1"/>
</dbReference>
<dbReference type="Pfam" id="PF07933">
    <property type="entry name" value="DUF1681"/>
    <property type="match status" value="1"/>
</dbReference>
<dbReference type="SUPFAM" id="SSF50729">
    <property type="entry name" value="PH domain-like"/>
    <property type="match status" value="1"/>
</dbReference>
<gene>
    <name type="ordered locus">At1g03900</name>
    <name type="ORF">F21M11.17</name>
</gene>
<protein>
    <recommendedName>
        <fullName>Uncharacterized protein At1g03900</fullName>
    </recommendedName>
</protein>
<organism>
    <name type="scientific">Arabidopsis thaliana</name>
    <name type="common">Mouse-ear cress</name>
    <dbReference type="NCBI Taxonomy" id="3702"/>
    <lineage>
        <taxon>Eukaryota</taxon>
        <taxon>Viridiplantae</taxon>
        <taxon>Streptophyta</taxon>
        <taxon>Embryophyta</taxon>
        <taxon>Tracheophyta</taxon>
        <taxon>Spermatophyta</taxon>
        <taxon>Magnoliopsida</taxon>
        <taxon>eudicotyledons</taxon>
        <taxon>Gunneridae</taxon>
        <taxon>Pentapetalae</taxon>
        <taxon>rosids</taxon>
        <taxon>malvids</taxon>
        <taxon>Brassicales</taxon>
        <taxon>Brassicaceae</taxon>
        <taxon>Camelineae</taxon>
        <taxon>Arabidopsis</taxon>
    </lineage>
</organism>